<gene>
    <name evidence="1" type="primary">trmD</name>
    <name type="ordered locus">ECDH10B_2774</name>
</gene>
<evidence type="ECO:0000255" key="1">
    <source>
        <dbReference type="HAMAP-Rule" id="MF_00605"/>
    </source>
</evidence>
<name>TRMD_ECODH</name>
<comment type="function">
    <text evidence="1">Specifically methylates guanosine-37 in various tRNAs.</text>
</comment>
<comment type="catalytic activity">
    <reaction evidence="1">
        <text>guanosine(37) in tRNA + S-adenosyl-L-methionine = N(1)-methylguanosine(37) in tRNA + S-adenosyl-L-homocysteine + H(+)</text>
        <dbReference type="Rhea" id="RHEA:36899"/>
        <dbReference type="Rhea" id="RHEA-COMP:10145"/>
        <dbReference type="Rhea" id="RHEA-COMP:10147"/>
        <dbReference type="ChEBI" id="CHEBI:15378"/>
        <dbReference type="ChEBI" id="CHEBI:57856"/>
        <dbReference type="ChEBI" id="CHEBI:59789"/>
        <dbReference type="ChEBI" id="CHEBI:73542"/>
        <dbReference type="ChEBI" id="CHEBI:74269"/>
        <dbReference type="EC" id="2.1.1.228"/>
    </reaction>
</comment>
<comment type="subunit">
    <text evidence="1">Homodimer.</text>
</comment>
<comment type="subcellular location">
    <subcellularLocation>
        <location evidence="1">Cytoplasm</location>
    </subcellularLocation>
</comment>
<comment type="similarity">
    <text evidence="1">Belongs to the RNA methyltransferase TrmD family.</text>
</comment>
<protein>
    <recommendedName>
        <fullName evidence="1">tRNA (guanine-N(1)-)-methyltransferase</fullName>
        <ecNumber evidence="1">2.1.1.228</ecNumber>
    </recommendedName>
    <alternativeName>
        <fullName evidence="1">M1G-methyltransferase</fullName>
    </alternativeName>
    <alternativeName>
        <fullName evidence="1">tRNA [GM37] methyltransferase</fullName>
    </alternativeName>
</protein>
<keyword id="KW-0963">Cytoplasm</keyword>
<keyword id="KW-0489">Methyltransferase</keyword>
<keyword id="KW-0949">S-adenosyl-L-methionine</keyword>
<keyword id="KW-0808">Transferase</keyword>
<keyword id="KW-0819">tRNA processing</keyword>
<reference key="1">
    <citation type="journal article" date="2008" name="J. Bacteriol.">
        <title>The complete genome sequence of Escherichia coli DH10B: insights into the biology of a laboratory workhorse.</title>
        <authorList>
            <person name="Durfee T."/>
            <person name="Nelson R."/>
            <person name="Baldwin S."/>
            <person name="Plunkett G. III"/>
            <person name="Burland V."/>
            <person name="Mau B."/>
            <person name="Petrosino J.F."/>
            <person name="Qin X."/>
            <person name="Muzny D.M."/>
            <person name="Ayele M."/>
            <person name="Gibbs R.A."/>
            <person name="Csorgo B."/>
            <person name="Posfai G."/>
            <person name="Weinstock G.M."/>
            <person name="Blattner F.R."/>
        </authorList>
    </citation>
    <scope>NUCLEOTIDE SEQUENCE [LARGE SCALE GENOMIC DNA]</scope>
    <source>
        <strain>K12 / DH10B</strain>
    </source>
</reference>
<sequence>MWIGIISLFPEMFRAITDYGVTGRAVKNGLLSIQSWSPRDFTHDRHRTVDDRPYGGGPGMLMMVQPLRDAIHAAKAAAGEGAKVIYLSPQGRKLDQAGVSELATNQKLILVCGRYEGIDERVIQTEIDEEWSIGDYVLSGGELPAMTLIDSVSRFIPGVLGHEASATEDSFAEGLLDCPHYTRPEVLEGMEVPPVLLSGNHAEIRRWRLKQSLGRTWLRRPELLENLALTEEQARLLAEFKTEHAQQQHKHDGMA</sequence>
<proteinExistence type="inferred from homology"/>
<feature type="chain" id="PRO_1000130167" description="tRNA (guanine-N(1)-)-methyltransferase">
    <location>
        <begin position="1"/>
        <end position="255"/>
    </location>
</feature>
<feature type="binding site" evidence="1">
    <location>
        <position position="113"/>
    </location>
    <ligand>
        <name>S-adenosyl-L-methionine</name>
        <dbReference type="ChEBI" id="CHEBI:59789"/>
    </ligand>
</feature>
<feature type="binding site" evidence="1">
    <location>
        <begin position="133"/>
        <end position="138"/>
    </location>
    <ligand>
        <name>S-adenosyl-L-methionine</name>
        <dbReference type="ChEBI" id="CHEBI:59789"/>
    </ligand>
</feature>
<organism>
    <name type="scientific">Escherichia coli (strain K12 / DH10B)</name>
    <dbReference type="NCBI Taxonomy" id="316385"/>
    <lineage>
        <taxon>Bacteria</taxon>
        <taxon>Pseudomonadati</taxon>
        <taxon>Pseudomonadota</taxon>
        <taxon>Gammaproteobacteria</taxon>
        <taxon>Enterobacterales</taxon>
        <taxon>Enterobacteriaceae</taxon>
        <taxon>Escherichia</taxon>
    </lineage>
</organism>
<dbReference type="EC" id="2.1.1.228" evidence="1"/>
<dbReference type="EMBL" id="CP000948">
    <property type="protein sequence ID" value="ACB03753.1"/>
    <property type="molecule type" value="Genomic_DNA"/>
</dbReference>
<dbReference type="RefSeq" id="WP_000264777.1">
    <property type="nucleotide sequence ID" value="NC_010473.1"/>
</dbReference>
<dbReference type="SMR" id="B1XBS9"/>
<dbReference type="GeneID" id="93774457"/>
<dbReference type="KEGG" id="ecd:ECDH10B_2774"/>
<dbReference type="HOGENOM" id="CLU_047363_0_1_6"/>
<dbReference type="GO" id="GO:0005829">
    <property type="term" value="C:cytosol"/>
    <property type="evidence" value="ECO:0007669"/>
    <property type="project" value="TreeGrafter"/>
</dbReference>
<dbReference type="GO" id="GO:0052906">
    <property type="term" value="F:tRNA (guanine(37)-N1)-methyltransferase activity"/>
    <property type="evidence" value="ECO:0007669"/>
    <property type="project" value="UniProtKB-UniRule"/>
</dbReference>
<dbReference type="GO" id="GO:0002939">
    <property type="term" value="P:tRNA N1-guanine methylation"/>
    <property type="evidence" value="ECO:0007669"/>
    <property type="project" value="TreeGrafter"/>
</dbReference>
<dbReference type="CDD" id="cd18080">
    <property type="entry name" value="TrmD-like"/>
    <property type="match status" value="1"/>
</dbReference>
<dbReference type="FunFam" id="1.10.1270.20:FF:000001">
    <property type="entry name" value="tRNA (guanine-N(1)-)-methyltransferase"/>
    <property type="match status" value="1"/>
</dbReference>
<dbReference type="FunFam" id="3.40.1280.10:FF:000001">
    <property type="entry name" value="tRNA (guanine-N(1)-)-methyltransferase"/>
    <property type="match status" value="1"/>
</dbReference>
<dbReference type="Gene3D" id="3.40.1280.10">
    <property type="match status" value="1"/>
</dbReference>
<dbReference type="Gene3D" id="1.10.1270.20">
    <property type="entry name" value="tRNA(m1g37)methyltransferase, domain 2"/>
    <property type="match status" value="1"/>
</dbReference>
<dbReference type="HAMAP" id="MF_00605">
    <property type="entry name" value="TrmD"/>
    <property type="match status" value="1"/>
</dbReference>
<dbReference type="InterPro" id="IPR029028">
    <property type="entry name" value="Alpha/beta_knot_MTases"/>
</dbReference>
<dbReference type="InterPro" id="IPR023148">
    <property type="entry name" value="tRNA_m1G_MeTrfase_C_sf"/>
</dbReference>
<dbReference type="InterPro" id="IPR002649">
    <property type="entry name" value="tRNA_m1G_MeTrfase_TrmD"/>
</dbReference>
<dbReference type="InterPro" id="IPR029026">
    <property type="entry name" value="tRNA_m1G_MTases_N"/>
</dbReference>
<dbReference type="InterPro" id="IPR016009">
    <property type="entry name" value="tRNA_MeTrfase_TRMD/TRM10"/>
</dbReference>
<dbReference type="NCBIfam" id="NF000648">
    <property type="entry name" value="PRK00026.1"/>
    <property type="match status" value="1"/>
</dbReference>
<dbReference type="NCBIfam" id="TIGR00088">
    <property type="entry name" value="trmD"/>
    <property type="match status" value="1"/>
</dbReference>
<dbReference type="PANTHER" id="PTHR46417">
    <property type="entry name" value="TRNA (GUANINE-N(1)-)-METHYLTRANSFERASE"/>
    <property type="match status" value="1"/>
</dbReference>
<dbReference type="PANTHER" id="PTHR46417:SF1">
    <property type="entry name" value="TRNA (GUANINE-N(1)-)-METHYLTRANSFERASE"/>
    <property type="match status" value="1"/>
</dbReference>
<dbReference type="Pfam" id="PF01746">
    <property type="entry name" value="tRNA_m1G_MT"/>
    <property type="match status" value="1"/>
</dbReference>
<dbReference type="PIRSF" id="PIRSF000386">
    <property type="entry name" value="tRNA_mtase"/>
    <property type="match status" value="1"/>
</dbReference>
<dbReference type="SUPFAM" id="SSF75217">
    <property type="entry name" value="alpha/beta knot"/>
    <property type="match status" value="1"/>
</dbReference>
<accession>B1XBS9</accession>